<accession>Q8I1C0</accession>
<proteinExistence type="inferred from homology"/>
<evidence type="ECO:0000250" key="1">
    <source>
        <dbReference type="UniProtKB" id="Q8T390"/>
    </source>
</evidence>
<evidence type="ECO:0000255" key="2"/>
<evidence type="ECO:0000255" key="3">
    <source>
        <dbReference type="PROSITE-ProRule" id="PRU00192"/>
    </source>
</evidence>
<evidence type="ECO:0000255" key="4">
    <source>
        <dbReference type="PROSITE-ProRule" id="PRU00361"/>
    </source>
</evidence>
<evidence type="ECO:0000256" key="5">
    <source>
        <dbReference type="SAM" id="MobiDB-lite"/>
    </source>
</evidence>
<evidence type="ECO:0000312" key="6">
    <source>
        <dbReference type="EMBL" id="AAO01051.1"/>
    </source>
</evidence>
<evidence type="ECO:0000312" key="7">
    <source>
        <dbReference type="EMBL" id="EAL28006.1"/>
    </source>
</evidence>
<organism>
    <name type="scientific">Drosophila pseudoobscura pseudoobscura</name>
    <name type="common">Fruit fly</name>
    <dbReference type="NCBI Taxonomy" id="46245"/>
    <lineage>
        <taxon>Eukaryota</taxon>
        <taxon>Metazoa</taxon>
        <taxon>Ecdysozoa</taxon>
        <taxon>Arthropoda</taxon>
        <taxon>Hexapoda</taxon>
        <taxon>Insecta</taxon>
        <taxon>Pterygota</taxon>
        <taxon>Neoptera</taxon>
        <taxon>Endopterygota</taxon>
        <taxon>Diptera</taxon>
        <taxon>Brachycera</taxon>
        <taxon>Muscomorpha</taxon>
        <taxon>Ephydroidea</taxon>
        <taxon>Drosophilidae</taxon>
        <taxon>Drosophila</taxon>
        <taxon>Sophophora</taxon>
    </lineage>
</organism>
<reference evidence="6" key="1">
    <citation type="journal article" date="2002" name="Genome Biol.">
        <title>Assessing the impact of comparative genomic sequence data on the functional annotation of the Drosophila genome.</title>
        <authorList>
            <person name="Bergman C.M."/>
            <person name="Pfeiffer B.D."/>
            <person name="Rincon-Limas D.E."/>
            <person name="Hoskins R.A."/>
            <person name="Gnirke A."/>
            <person name="Mungall C.J."/>
            <person name="Wang A.M."/>
            <person name="Kronmiller B."/>
            <person name="Pacleb J.M."/>
            <person name="Park S."/>
            <person name="Stapleton M."/>
            <person name="Wan K.H."/>
            <person name="George R.A."/>
            <person name="de Jong P.J."/>
            <person name="Botas J."/>
            <person name="Rubin G.M."/>
            <person name="Celniker S.E."/>
        </authorList>
    </citation>
    <scope>NUCLEOTIDE SEQUENCE [LARGE SCALE GENOMIC DNA]</scope>
    <source>
        <strain evidence="6">Tucson 14011-0121.4</strain>
    </source>
</reference>
<reference evidence="7" key="2">
    <citation type="journal article" date="2005" name="Genome Res.">
        <title>Comparative genome sequencing of Drosophila pseudoobscura: chromosomal, gene, and cis-element evolution.</title>
        <authorList>
            <person name="Richards S."/>
            <person name="Liu Y."/>
            <person name="Bettencourt B.R."/>
            <person name="Hradecky P."/>
            <person name="Letovsky S."/>
            <person name="Nielsen R."/>
            <person name="Thornton K."/>
            <person name="Hubisz M.J."/>
            <person name="Chen R."/>
            <person name="Meisel R.P."/>
            <person name="Couronne O."/>
            <person name="Hua S."/>
            <person name="Smith M.A."/>
            <person name="Zhang P."/>
            <person name="Liu J."/>
            <person name="Bussemaker H.J."/>
            <person name="van Batenburg M.F."/>
            <person name="Howells S.L."/>
            <person name="Scherer S.E."/>
            <person name="Sodergren E."/>
            <person name="Matthews B.B."/>
            <person name="Crosby M.A."/>
            <person name="Schroeder A.J."/>
            <person name="Ortiz-Barrientos D."/>
            <person name="Rives C.M."/>
            <person name="Metzker M.L."/>
            <person name="Muzny D.M."/>
            <person name="Scott G."/>
            <person name="Steffen D."/>
            <person name="Wheeler D.A."/>
            <person name="Worley K.C."/>
            <person name="Havlak P."/>
            <person name="Durbin K.J."/>
            <person name="Egan A."/>
            <person name="Gill R."/>
            <person name="Hume J."/>
            <person name="Morgan M.B."/>
            <person name="Miner G."/>
            <person name="Hamilton C."/>
            <person name="Huang Y."/>
            <person name="Waldron L."/>
            <person name="Verduzco D."/>
            <person name="Clerc-Blankenburg K.P."/>
            <person name="Dubchak I."/>
            <person name="Noor M.A.F."/>
            <person name="Anderson W."/>
            <person name="White K.P."/>
            <person name="Clark A.G."/>
            <person name="Schaeffer S.W."/>
            <person name="Gelbart W.M."/>
            <person name="Weinstock G.M."/>
            <person name="Gibbs R.A."/>
        </authorList>
    </citation>
    <scope>NUCLEOTIDE SEQUENCE [LARGE SCALE GENOMIC DNA]</scope>
    <source>
        <strain>MV2-25 / Tucson 14011-0121.94</strain>
    </source>
</reference>
<dbReference type="EMBL" id="AY190947">
    <property type="protein sequence ID" value="AAO01051.1"/>
    <property type="molecule type" value="Genomic_DNA"/>
</dbReference>
<dbReference type="EMBL" id="CM000070">
    <property type="protein sequence ID" value="EAL28006.1"/>
    <property type="molecule type" value="Genomic_DNA"/>
</dbReference>
<dbReference type="RefSeq" id="XP_001358863.1">
    <property type="nucleotide sequence ID" value="XM_001358826.3"/>
</dbReference>
<dbReference type="RefSeq" id="XP_015037404.1">
    <property type="nucleotide sequence ID" value="XM_015181918.1"/>
</dbReference>
<dbReference type="SMR" id="Q8I1C0"/>
<dbReference type="FunCoup" id="Q8I1C0">
    <property type="interactions" value="758"/>
</dbReference>
<dbReference type="STRING" id="46245.Q8I1C0"/>
<dbReference type="EnsemblMetazoa" id="FBtr0285605">
    <property type="protein sequence ID" value="FBpp0284043"/>
    <property type="gene ID" value="FBgn0064416"/>
</dbReference>
<dbReference type="EnsemblMetazoa" id="FBtr0380938">
    <property type="protein sequence ID" value="FBpp0341278"/>
    <property type="gene ID" value="FBgn0064416"/>
</dbReference>
<dbReference type="GeneID" id="4801830"/>
<dbReference type="KEGG" id="dpo:4801830"/>
<dbReference type="CTD" id="42265"/>
<dbReference type="eggNOG" id="KOG1118">
    <property type="taxonomic scope" value="Eukaryota"/>
</dbReference>
<dbReference type="HOGENOM" id="CLU_047887_0_0_1"/>
<dbReference type="InParanoid" id="Q8I1C0"/>
<dbReference type="OMA" id="MFPANYC"/>
<dbReference type="PhylomeDB" id="Q8I1C0"/>
<dbReference type="Proteomes" id="UP000001819">
    <property type="component" value="Chromosome 2"/>
</dbReference>
<dbReference type="Bgee" id="FBgn0064416">
    <property type="expression patterns" value="Expressed in insect adult head and 2 other cell types or tissues"/>
</dbReference>
<dbReference type="ExpressionAtlas" id="Q8I1C0">
    <property type="expression patterns" value="baseline"/>
</dbReference>
<dbReference type="GO" id="GO:0005737">
    <property type="term" value="C:cytoplasm"/>
    <property type="evidence" value="ECO:0000250"/>
    <property type="project" value="UniProtKB"/>
</dbReference>
<dbReference type="GO" id="GO:0098978">
    <property type="term" value="C:glutamatergic synapse"/>
    <property type="evidence" value="ECO:0007669"/>
    <property type="project" value="TreeGrafter"/>
</dbReference>
<dbReference type="GO" id="GO:0016020">
    <property type="term" value="C:membrane"/>
    <property type="evidence" value="ECO:0007669"/>
    <property type="project" value="UniProtKB-SubCell"/>
</dbReference>
<dbReference type="GO" id="GO:0098793">
    <property type="term" value="C:presynapse"/>
    <property type="evidence" value="ECO:0007669"/>
    <property type="project" value="TreeGrafter"/>
</dbReference>
<dbReference type="GO" id="GO:0050803">
    <property type="term" value="P:regulation of synapse structure or activity"/>
    <property type="evidence" value="ECO:0000250"/>
    <property type="project" value="UniProtKB"/>
</dbReference>
<dbReference type="GO" id="GO:0048488">
    <property type="term" value="P:synaptic vesicle endocytosis"/>
    <property type="evidence" value="ECO:0000250"/>
    <property type="project" value="UniProtKB"/>
</dbReference>
<dbReference type="GO" id="GO:0016191">
    <property type="term" value="P:synaptic vesicle uncoating"/>
    <property type="evidence" value="ECO:0007669"/>
    <property type="project" value="TreeGrafter"/>
</dbReference>
<dbReference type="CDD" id="cd07592">
    <property type="entry name" value="BAR_Endophilin_A"/>
    <property type="match status" value="1"/>
</dbReference>
<dbReference type="CDD" id="cd11803">
    <property type="entry name" value="SH3_Endophilin_A"/>
    <property type="match status" value="1"/>
</dbReference>
<dbReference type="FunFam" id="1.20.1270.60:FF:000021">
    <property type="entry name" value="Endophilin-A2 isoform 1"/>
    <property type="match status" value="1"/>
</dbReference>
<dbReference type="FunFam" id="2.30.30.40:FF:000072">
    <property type="entry name" value="Unconventional Myosin IB"/>
    <property type="match status" value="1"/>
</dbReference>
<dbReference type="Gene3D" id="1.20.1270.60">
    <property type="entry name" value="Arfaptin homology (AH) domain/BAR domain"/>
    <property type="match status" value="1"/>
</dbReference>
<dbReference type="Gene3D" id="2.30.30.40">
    <property type="entry name" value="SH3 Domains"/>
    <property type="match status" value="1"/>
</dbReference>
<dbReference type="InterPro" id="IPR027267">
    <property type="entry name" value="AH/BAR_dom_sf"/>
</dbReference>
<dbReference type="InterPro" id="IPR004148">
    <property type="entry name" value="BAR_dom"/>
</dbReference>
<dbReference type="InterPro" id="IPR035824">
    <property type="entry name" value="Endophilin_A_SH3"/>
</dbReference>
<dbReference type="InterPro" id="IPR050384">
    <property type="entry name" value="Endophilin_SH3RF"/>
</dbReference>
<dbReference type="InterPro" id="IPR036028">
    <property type="entry name" value="SH3-like_dom_sf"/>
</dbReference>
<dbReference type="InterPro" id="IPR001452">
    <property type="entry name" value="SH3_domain"/>
</dbReference>
<dbReference type="PANTHER" id="PTHR14167:SF81">
    <property type="entry name" value="ENDOPHILIN-A"/>
    <property type="match status" value="1"/>
</dbReference>
<dbReference type="PANTHER" id="PTHR14167">
    <property type="entry name" value="SH3 DOMAIN-CONTAINING"/>
    <property type="match status" value="1"/>
</dbReference>
<dbReference type="Pfam" id="PF03114">
    <property type="entry name" value="BAR"/>
    <property type="match status" value="1"/>
</dbReference>
<dbReference type="Pfam" id="PF00018">
    <property type="entry name" value="SH3_1"/>
    <property type="match status" value="1"/>
</dbReference>
<dbReference type="PRINTS" id="PR00452">
    <property type="entry name" value="SH3DOMAIN"/>
</dbReference>
<dbReference type="PRINTS" id="PR01887">
    <property type="entry name" value="SPECTRNALPHA"/>
</dbReference>
<dbReference type="SMART" id="SM00721">
    <property type="entry name" value="BAR"/>
    <property type="match status" value="1"/>
</dbReference>
<dbReference type="SMART" id="SM00326">
    <property type="entry name" value="SH3"/>
    <property type="match status" value="1"/>
</dbReference>
<dbReference type="SUPFAM" id="SSF103657">
    <property type="entry name" value="BAR/IMD domain-like"/>
    <property type="match status" value="1"/>
</dbReference>
<dbReference type="SUPFAM" id="SSF50044">
    <property type="entry name" value="SH3-domain"/>
    <property type="match status" value="1"/>
</dbReference>
<dbReference type="PROSITE" id="PS51021">
    <property type="entry name" value="BAR"/>
    <property type="match status" value="1"/>
</dbReference>
<dbReference type="PROSITE" id="PS50002">
    <property type="entry name" value="SH3"/>
    <property type="match status" value="1"/>
</dbReference>
<sequence length="369" mass="41387">MAFAGLKKQINKANQYMTEKMGGAEGTKLDMDFMDMERKTDVTVELVEELQLKTKEFLQPNPTARAKMAAVKGISKLSGQAKSNTYPQPEGLLAECMLTYGKKLGEDNSVFAQALVEFGESLKQMADVKYSLDDNIKQNFLEPLHHMQMKDLKEVMHHRKKLQGRRLDFDCKRRRQAKDDEIRGAEDKFAESLQLAQVGMFNLLENDTEHVSQLVTFAEALYDFHSQCADVLRGLQETLQEKRSEAESRPRNEFVPKTLLDLNLDGGGGGLIDDGTPSHISSSASPLPSPMRSPAKSMAVTPSRQQQPCCQALYDFDPENPGELGFKENDIITLLNRVDDNWYEGAVNGRTGYFPQSYVQVQVPLPNGN</sequence>
<comment type="function">
    <text evidence="1">Required presynaptically at the neuromuscular junction. Implicated in synaptic vesicle endocytosis.</text>
</comment>
<comment type="subcellular location">
    <subcellularLocation>
        <location evidence="1">Cytoplasm</location>
    </subcellularLocation>
    <subcellularLocation>
        <location evidence="1">Membrane</location>
        <topology evidence="1">Peripheral membrane protein</topology>
    </subcellularLocation>
    <text evidence="1">Associated with internal membranes. Expressed presynaptically at NMJs.</text>
</comment>
<comment type="similarity">
    <text evidence="2">Belongs to the endophilin family.</text>
</comment>
<protein>
    <recommendedName>
        <fullName>Endophilin-A</fullName>
    </recommendedName>
    <alternativeName>
        <fullName>SH3 domain-containing GRB2-like protein</fullName>
    </alternativeName>
</protein>
<keyword id="KW-0175">Coiled coil</keyword>
<keyword id="KW-0963">Cytoplasm</keyword>
<keyword id="KW-0254">Endocytosis</keyword>
<keyword id="KW-0472">Membrane</keyword>
<keyword id="KW-0597">Phosphoprotein</keyword>
<keyword id="KW-1185">Reference proteome</keyword>
<keyword id="KW-0728">SH3 domain</keyword>
<name>SH3G3_DROPS</name>
<gene>
    <name evidence="1" type="primary">EndoA</name>
    <name type="ORF">GA12885</name>
</gene>
<feature type="chain" id="PRO_0000285839" description="Endophilin-A">
    <location>
        <begin position="1"/>
        <end position="369"/>
    </location>
</feature>
<feature type="domain" description="BAR" evidence="4">
    <location>
        <begin position="18"/>
        <end position="248"/>
    </location>
</feature>
<feature type="domain" description="SH3" evidence="3">
    <location>
        <begin position="305"/>
        <end position="364"/>
    </location>
</feature>
<feature type="region of interest" description="Disordered" evidence="5">
    <location>
        <begin position="275"/>
        <end position="296"/>
    </location>
</feature>
<feature type="coiled-coil region" evidence="2">
    <location>
        <begin position="227"/>
        <end position="247"/>
    </location>
</feature>
<feature type="compositionally biased region" description="Low complexity" evidence="5">
    <location>
        <begin position="275"/>
        <end position="294"/>
    </location>
</feature>